<proteinExistence type="inferred from homology"/>
<reference key="1">
    <citation type="journal article" date="1989" name="Nucleic Acids Res.">
        <title>The primary structure of sunflower (Helianthus annuus) ubiquitin.</title>
        <authorList>
            <person name="Binet M.N."/>
            <person name="Steinmetz A."/>
            <person name="Tessier L.H."/>
        </authorList>
    </citation>
    <scope>NUCLEOTIDE SEQUENCE [MRNA]</scope>
    <source>
        <strain>cv. HA401B / Cargill</strain>
    </source>
</reference>
<name>UBIQ_HELAN</name>
<evidence type="ECO:0000250" key="1"/>
<evidence type="ECO:0000255" key="2">
    <source>
        <dbReference type="PROSITE-ProRule" id="PRU00214"/>
    </source>
</evidence>
<evidence type="ECO:0000305" key="3"/>
<feature type="chain" id="PRO_0000114840" description="Ubiquitin">
    <location>
        <begin position="1"/>
        <end position="76"/>
    </location>
</feature>
<feature type="propeptide" id="PRO_0000396429">
    <location>
        <position position="77"/>
    </location>
</feature>
<feature type="domain" description="Ubiquitin-like" evidence="2">
    <location>
        <begin position="1"/>
        <end position="76"/>
    </location>
</feature>
<feature type="cross-link" description="Glycyl lysine isopeptide (Lys-Gly) (interchain with G-Cter in ubiquitin)" evidence="1">
    <location>
        <position position="48"/>
    </location>
</feature>
<feature type="cross-link" description="Glycyl lysine isopeptide (Gly-Lys) (interchain with K-? in acceptor proteins)" evidence="2">
    <location>
        <position position="76"/>
    </location>
</feature>
<organism>
    <name type="scientific">Helianthus annuus</name>
    <name type="common">Common sunflower</name>
    <dbReference type="NCBI Taxonomy" id="4232"/>
    <lineage>
        <taxon>Eukaryota</taxon>
        <taxon>Viridiplantae</taxon>
        <taxon>Streptophyta</taxon>
        <taxon>Embryophyta</taxon>
        <taxon>Tracheophyta</taxon>
        <taxon>Spermatophyta</taxon>
        <taxon>Magnoliopsida</taxon>
        <taxon>eudicotyledons</taxon>
        <taxon>Gunneridae</taxon>
        <taxon>Pentapetalae</taxon>
        <taxon>asterids</taxon>
        <taxon>campanulids</taxon>
        <taxon>Asterales</taxon>
        <taxon>Asteraceae</taxon>
        <taxon>Asteroideae</taxon>
        <taxon>Heliantheae alliance</taxon>
        <taxon>Heliantheae</taxon>
        <taxon>Helianthus</taxon>
    </lineage>
</organism>
<keyword id="KW-0963">Cytoplasm</keyword>
<keyword id="KW-1017">Isopeptide bond</keyword>
<keyword id="KW-0539">Nucleus</keyword>
<keyword id="KW-0832">Ubl conjugation</keyword>
<protein>
    <recommendedName>
        <fullName>Ubiquitin</fullName>
    </recommendedName>
</protein>
<dbReference type="EMBL" id="X14333">
    <property type="protein sequence ID" value="CAA32511.1"/>
    <property type="molecule type" value="mRNA"/>
</dbReference>
<dbReference type="PIR" id="S03599">
    <property type="entry name" value="UQFS"/>
</dbReference>
<dbReference type="SMR" id="P69313"/>
<dbReference type="GO" id="GO:0005737">
    <property type="term" value="C:cytoplasm"/>
    <property type="evidence" value="ECO:0007669"/>
    <property type="project" value="UniProtKB-SubCell"/>
</dbReference>
<dbReference type="GO" id="GO:0005634">
    <property type="term" value="C:nucleus"/>
    <property type="evidence" value="ECO:0007669"/>
    <property type="project" value="UniProtKB-SubCell"/>
</dbReference>
<dbReference type="GO" id="GO:0003729">
    <property type="term" value="F:mRNA binding"/>
    <property type="evidence" value="ECO:0007669"/>
    <property type="project" value="UniProtKB-ARBA"/>
</dbReference>
<dbReference type="CDD" id="cd01803">
    <property type="entry name" value="Ubl_ubiquitin"/>
    <property type="match status" value="1"/>
</dbReference>
<dbReference type="FunFam" id="3.10.20.90:FF:000016">
    <property type="entry name" value="Polyubiquitin 3"/>
    <property type="match status" value="1"/>
</dbReference>
<dbReference type="Gene3D" id="3.10.20.90">
    <property type="entry name" value="Phosphatidylinositol 3-kinase Catalytic Subunit, Chain A, domain 1"/>
    <property type="match status" value="1"/>
</dbReference>
<dbReference type="InterPro" id="IPR000626">
    <property type="entry name" value="Ubiquitin-like_dom"/>
</dbReference>
<dbReference type="InterPro" id="IPR029071">
    <property type="entry name" value="Ubiquitin-like_domsf"/>
</dbReference>
<dbReference type="InterPro" id="IPR019954">
    <property type="entry name" value="Ubiquitin_CS"/>
</dbReference>
<dbReference type="InterPro" id="IPR019956">
    <property type="entry name" value="Ubiquitin_dom"/>
</dbReference>
<dbReference type="InterPro" id="IPR050158">
    <property type="entry name" value="Ubiquitin_ubiquitin-like"/>
</dbReference>
<dbReference type="PANTHER" id="PTHR10666">
    <property type="entry name" value="UBIQUITIN"/>
    <property type="match status" value="1"/>
</dbReference>
<dbReference type="Pfam" id="PF00240">
    <property type="entry name" value="ubiquitin"/>
    <property type="match status" value="1"/>
</dbReference>
<dbReference type="PRINTS" id="PR00348">
    <property type="entry name" value="UBIQUITIN"/>
</dbReference>
<dbReference type="SMART" id="SM00213">
    <property type="entry name" value="UBQ"/>
    <property type="match status" value="1"/>
</dbReference>
<dbReference type="SUPFAM" id="SSF54236">
    <property type="entry name" value="Ubiquitin-like"/>
    <property type="match status" value="1"/>
</dbReference>
<dbReference type="PROSITE" id="PS00299">
    <property type="entry name" value="UBIQUITIN_1"/>
    <property type="match status" value="1"/>
</dbReference>
<dbReference type="PROSITE" id="PS50053">
    <property type="entry name" value="UBIQUITIN_2"/>
    <property type="match status" value="1"/>
</dbReference>
<accession>P69313</accession>
<accession>O82079</accession>
<accession>P03993</accession>
<sequence length="77" mass="8672">MQIFVKTLTGKTITLEVESSDTIDNVKAKIQDKEGIPPDQQRLIFAGKQLEDGRTLADYNIQKESTLHLVLRLRGGF</sequence>
<comment type="function">
    <text evidence="1">Ubiquitin exists either covalently attached to another protein, or free (unanchored). When covalently bound, it is conjugated to target proteins via an isopeptide bond either as a monomer (monoubiquitin), a polymer linked via different Lys residues of the ubiquitin (polyubiquitin chains) or a linear polymer linked via the initiator Met of the ubiquitin (linear polyubiquitin chains). Polyubiquitin chains, when attached to a target protein, have different functions depending on the Lys residue of the ubiquitin that is linked: Lys-48-linked is involved in protein degradation via the proteasome. Linear polymer chains formed via attachment by the initiator Met lead to cell signaling. Ubiquitin is usually conjugated to Lys residues of target proteins, however, in rare cases, conjugation to Cys or Ser residues has been observed. When polyubiquitin is free (unanchored-polyubiquitin), it also has distinct roles, such as in activation of protein kinases, and in signaling (By similarity).</text>
</comment>
<comment type="subcellular location">
    <subcellularLocation>
        <location evidence="1">Cytoplasm</location>
    </subcellularLocation>
    <subcellularLocation>
        <location evidence="1">Nucleus</location>
    </subcellularLocation>
</comment>
<comment type="similarity">
    <text evidence="3">Belongs to the ubiquitin family.</text>
</comment>